<accession>Q2P849</accession>
<protein>
    <recommendedName>
        <fullName evidence="1">3-dehydroquinate dehydratase</fullName>
        <shortName evidence="1">3-dehydroquinase</shortName>
        <ecNumber evidence="1">4.2.1.10</ecNumber>
    </recommendedName>
    <alternativeName>
        <fullName evidence="1">Type II DHQase</fullName>
    </alternativeName>
</protein>
<reference key="1">
    <citation type="journal article" date="2005" name="Jpn. Agric. Res. Q.">
        <title>Genome sequence of Xanthomonas oryzae pv. oryzae suggests contribution of large numbers of effector genes and insertion sequences to its race diversity.</title>
        <authorList>
            <person name="Ochiai H."/>
            <person name="Inoue Y."/>
            <person name="Takeya M."/>
            <person name="Sasaki A."/>
            <person name="Kaku H."/>
        </authorList>
    </citation>
    <scope>NUCLEOTIDE SEQUENCE [LARGE SCALE GENOMIC DNA]</scope>
    <source>
        <strain>MAFF 311018</strain>
    </source>
</reference>
<proteinExistence type="inferred from homology"/>
<feature type="chain" id="PRO_1000023533" description="3-dehydroquinate dehydratase">
    <location>
        <begin position="1"/>
        <end position="148"/>
    </location>
</feature>
<feature type="active site" description="Proton acceptor" evidence="1">
    <location>
        <position position="23"/>
    </location>
</feature>
<feature type="active site" description="Proton donor" evidence="1">
    <location>
        <position position="101"/>
    </location>
</feature>
<feature type="binding site" evidence="1">
    <location>
        <position position="75"/>
    </location>
    <ligand>
        <name>substrate</name>
    </ligand>
</feature>
<feature type="binding site" evidence="1">
    <location>
        <position position="81"/>
    </location>
    <ligand>
        <name>substrate</name>
    </ligand>
</feature>
<feature type="binding site" evidence="1">
    <location>
        <position position="88"/>
    </location>
    <ligand>
        <name>substrate</name>
    </ligand>
</feature>
<feature type="binding site" evidence="1">
    <location>
        <begin position="102"/>
        <end position="103"/>
    </location>
    <ligand>
        <name>substrate</name>
    </ligand>
</feature>
<feature type="binding site" evidence="1">
    <location>
        <position position="112"/>
    </location>
    <ligand>
        <name>substrate</name>
    </ligand>
</feature>
<feature type="site" description="Transition state stabilizer" evidence="1">
    <location>
        <position position="18"/>
    </location>
</feature>
<evidence type="ECO:0000255" key="1">
    <source>
        <dbReference type="HAMAP-Rule" id="MF_00169"/>
    </source>
</evidence>
<keyword id="KW-0028">Amino-acid biosynthesis</keyword>
<keyword id="KW-0057">Aromatic amino acid biosynthesis</keyword>
<keyword id="KW-0456">Lyase</keyword>
<name>AROQ_XANOM</name>
<dbReference type="EC" id="4.2.1.10" evidence="1"/>
<dbReference type="EMBL" id="AP008229">
    <property type="protein sequence ID" value="BAE67278.1"/>
    <property type="molecule type" value="Genomic_DNA"/>
</dbReference>
<dbReference type="RefSeq" id="WP_011407485.1">
    <property type="nucleotide sequence ID" value="NC_007705.1"/>
</dbReference>
<dbReference type="SMR" id="Q2P849"/>
<dbReference type="KEGG" id="xom:XOO0523"/>
<dbReference type="HOGENOM" id="CLU_090968_1_0_6"/>
<dbReference type="UniPathway" id="UPA00053">
    <property type="reaction ID" value="UER00086"/>
</dbReference>
<dbReference type="GO" id="GO:0003855">
    <property type="term" value="F:3-dehydroquinate dehydratase activity"/>
    <property type="evidence" value="ECO:0007669"/>
    <property type="project" value="UniProtKB-UniRule"/>
</dbReference>
<dbReference type="GO" id="GO:0008652">
    <property type="term" value="P:amino acid biosynthetic process"/>
    <property type="evidence" value="ECO:0007669"/>
    <property type="project" value="UniProtKB-KW"/>
</dbReference>
<dbReference type="GO" id="GO:0009073">
    <property type="term" value="P:aromatic amino acid family biosynthetic process"/>
    <property type="evidence" value="ECO:0007669"/>
    <property type="project" value="UniProtKB-KW"/>
</dbReference>
<dbReference type="GO" id="GO:0009423">
    <property type="term" value="P:chorismate biosynthetic process"/>
    <property type="evidence" value="ECO:0007669"/>
    <property type="project" value="UniProtKB-UniRule"/>
</dbReference>
<dbReference type="GO" id="GO:0019631">
    <property type="term" value="P:quinate catabolic process"/>
    <property type="evidence" value="ECO:0007669"/>
    <property type="project" value="TreeGrafter"/>
</dbReference>
<dbReference type="CDD" id="cd00466">
    <property type="entry name" value="DHQase_II"/>
    <property type="match status" value="1"/>
</dbReference>
<dbReference type="Gene3D" id="3.40.50.9100">
    <property type="entry name" value="Dehydroquinase, class II"/>
    <property type="match status" value="1"/>
</dbReference>
<dbReference type="HAMAP" id="MF_00169">
    <property type="entry name" value="AroQ"/>
    <property type="match status" value="1"/>
</dbReference>
<dbReference type="InterPro" id="IPR001874">
    <property type="entry name" value="DHquinase_II"/>
</dbReference>
<dbReference type="InterPro" id="IPR018509">
    <property type="entry name" value="DHquinase_II_CS"/>
</dbReference>
<dbReference type="InterPro" id="IPR036441">
    <property type="entry name" value="DHquinase_II_sf"/>
</dbReference>
<dbReference type="NCBIfam" id="TIGR01088">
    <property type="entry name" value="aroQ"/>
    <property type="match status" value="1"/>
</dbReference>
<dbReference type="NCBIfam" id="NF003804">
    <property type="entry name" value="PRK05395.1-1"/>
    <property type="match status" value="1"/>
</dbReference>
<dbReference type="NCBIfam" id="NF003805">
    <property type="entry name" value="PRK05395.1-2"/>
    <property type="match status" value="1"/>
</dbReference>
<dbReference type="NCBIfam" id="NF003806">
    <property type="entry name" value="PRK05395.1-3"/>
    <property type="match status" value="1"/>
</dbReference>
<dbReference type="NCBIfam" id="NF003807">
    <property type="entry name" value="PRK05395.1-4"/>
    <property type="match status" value="1"/>
</dbReference>
<dbReference type="PANTHER" id="PTHR21272">
    <property type="entry name" value="CATABOLIC 3-DEHYDROQUINASE"/>
    <property type="match status" value="1"/>
</dbReference>
<dbReference type="PANTHER" id="PTHR21272:SF3">
    <property type="entry name" value="CATABOLIC 3-DEHYDROQUINASE"/>
    <property type="match status" value="1"/>
</dbReference>
<dbReference type="Pfam" id="PF01220">
    <property type="entry name" value="DHquinase_II"/>
    <property type="match status" value="1"/>
</dbReference>
<dbReference type="PIRSF" id="PIRSF001399">
    <property type="entry name" value="DHquinase_II"/>
    <property type="match status" value="1"/>
</dbReference>
<dbReference type="SUPFAM" id="SSF52304">
    <property type="entry name" value="Type II 3-dehydroquinate dehydratase"/>
    <property type="match status" value="1"/>
</dbReference>
<dbReference type="PROSITE" id="PS01029">
    <property type="entry name" value="DEHYDROQUINASE_II"/>
    <property type="match status" value="1"/>
</dbReference>
<organism>
    <name type="scientific">Xanthomonas oryzae pv. oryzae (strain MAFF 311018)</name>
    <dbReference type="NCBI Taxonomy" id="342109"/>
    <lineage>
        <taxon>Bacteria</taxon>
        <taxon>Pseudomonadati</taxon>
        <taxon>Pseudomonadota</taxon>
        <taxon>Gammaproteobacteria</taxon>
        <taxon>Lysobacterales</taxon>
        <taxon>Lysobacteraceae</taxon>
        <taxon>Xanthomonas</taxon>
    </lineage>
</organism>
<gene>
    <name evidence="1" type="primary">aroQ</name>
    <name type="ordered locus">XOO0523</name>
</gene>
<sequence>MAHLLLLHGPNLNLLGTREPEVYGRTTLAQIDAALVDRAQAAGHALDCLQSNAEHVLVERIHAAREDGTAYILINPAAFTHTSLALRDALLGVGLPFVEIHLSNPHAREPFRHHSYLSDKADGVICGFGADSYRLALEAVIARLECDA</sequence>
<comment type="function">
    <text evidence="1">Catalyzes a trans-dehydration via an enolate intermediate.</text>
</comment>
<comment type="catalytic activity">
    <reaction evidence="1">
        <text>3-dehydroquinate = 3-dehydroshikimate + H2O</text>
        <dbReference type="Rhea" id="RHEA:21096"/>
        <dbReference type="ChEBI" id="CHEBI:15377"/>
        <dbReference type="ChEBI" id="CHEBI:16630"/>
        <dbReference type="ChEBI" id="CHEBI:32364"/>
        <dbReference type="EC" id="4.2.1.10"/>
    </reaction>
</comment>
<comment type="pathway">
    <text evidence="1">Metabolic intermediate biosynthesis; chorismate biosynthesis; chorismate from D-erythrose 4-phosphate and phosphoenolpyruvate: step 3/7.</text>
</comment>
<comment type="subunit">
    <text evidence="1">Homododecamer.</text>
</comment>
<comment type="similarity">
    <text evidence="1">Belongs to the type-II 3-dehydroquinase family.</text>
</comment>